<gene>
    <name evidence="1" type="primary">atpF</name>
    <name type="ordered locus">SAOUHSC_02347</name>
</gene>
<keyword id="KW-0066">ATP synthesis</keyword>
<keyword id="KW-1003">Cell membrane</keyword>
<keyword id="KW-0138">CF(0)</keyword>
<keyword id="KW-0375">Hydrogen ion transport</keyword>
<keyword id="KW-0406">Ion transport</keyword>
<keyword id="KW-0472">Membrane</keyword>
<keyword id="KW-1185">Reference proteome</keyword>
<keyword id="KW-0812">Transmembrane</keyword>
<keyword id="KW-1133">Transmembrane helix</keyword>
<keyword id="KW-0813">Transport</keyword>
<protein>
    <recommendedName>
        <fullName evidence="1">ATP synthase subunit b</fullName>
    </recommendedName>
    <alternativeName>
        <fullName evidence="1">ATP synthase F(0) sector subunit b</fullName>
    </alternativeName>
    <alternativeName>
        <fullName evidence="1">ATPase subunit I</fullName>
    </alternativeName>
    <alternativeName>
        <fullName evidence="1">F-type ATPase subunit b</fullName>
        <shortName evidence="1">F-ATPase subunit b</shortName>
    </alternativeName>
</protein>
<name>ATPF_STAA8</name>
<dbReference type="EMBL" id="CP000253">
    <property type="protein sequence ID" value="ABD31379.1"/>
    <property type="molecule type" value="Genomic_DNA"/>
</dbReference>
<dbReference type="RefSeq" id="WP_000140679.1">
    <property type="nucleotide sequence ID" value="NZ_LS483365.1"/>
</dbReference>
<dbReference type="RefSeq" id="YP_500824.1">
    <property type="nucleotide sequence ID" value="NC_007795.1"/>
</dbReference>
<dbReference type="SMR" id="Q2G2F8"/>
<dbReference type="STRING" id="93061.SAOUHSC_02347"/>
<dbReference type="PaxDb" id="1280-SAXN108_2352"/>
<dbReference type="GeneID" id="3919391"/>
<dbReference type="KEGG" id="sao:SAOUHSC_02347"/>
<dbReference type="PATRIC" id="fig|93061.5.peg.2125"/>
<dbReference type="eggNOG" id="COG0711">
    <property type="taxonomic scope" value="Bacteria"/>
</dbReference>
<dbReference type="HOGENOM" id="CLU_079215_4_2_9"/>
<dbReference type="OrthoDB" id="282095at2"/>
<dbReference type="PRO" id="PR:Q2G2F8"/>
<dbReference type="Proteomes" id="UP000008816">
    <property type="component" value="Chromosome"/>
</dbReference>
<dbReference type="GO" id="GO:0005886">
    <property type="term" value="C:plasma membrane"/>
    <property type="evidence" value="ECO:0007669"/>
    <property type="project" value="UniProtKB-SubCell"/>
</dbReference>
<dbReference type="GO" id="GO:0045259">
    <property type="term" value="C:proton-transporting ATP synthase complex"/>
    <property type="evidence" value="ECO:0007669"/>
    <property type="project" value="UniProtKB-KW"/>
</dbReference>
<dbReference type="GO" id="GO:0046933">
    <property type="term" value="F:proton-transporting ATP synthase activity, rotational mechanism"/>
    <property type="evidence" value="ECO:0007669"/>
    <property type="project" value="UniProtKB-UniRule"/>
</dbReference>
<dbReference type="CDD" id="cd06503">
    <property type="entry name" value="ATP-synt_Fo_b"/>
    <property type="match status" value="1"/>
</dbReference>
<dbReference type="HAMAP" id="MF_01398">
    <property type="entry name" value="ATP_synth_b_bprime"/>
    <property type="match status" value="1"/>
</dbReference>
<dbReference type="InterPro" id="IPR028987">
    <property type="entry name" value="ATP_synth_B-like_membr_sf"/>
</dbReference>
<dbReference type="InterPro" id="IPR002146">
    <property type="entry name" value="ATP_synth_b/b'su_bac/chlpt"/>
</dbReference>
<dbReference type="InterPro" id="IPR005864">
    <property type="entry name" value="ATP_synth_F0_bsu_bac"/>
</dbReference>
<dbReference type="InterPro" id="IPR050059">
    <property type="entry name" value="ATP_synthase_B_chain"/>
</dbReference>
<dbReference type="NCBIfam" id="TIGR01144">
    <property type="entry name" value="ATP_synt_b"/>
    <property type="match status" value="1"/>
</dbReference>
<dbReference type="NCBIfam" id="NF009987">
    <property type="entry name" value="PRK13453.1"/>
    <property type="match status" value="1"/>
</dbReference>
<dbReference type="PANTHER" id="PTHR33445:SF1">
    <property type="entry name" value="ATP SYNTHASE SUBUNIT B"/>
    <property type="match status" value="1"/>
</dbReference>
<dbReference type="PANTHER" id="PTHR33445">
    <property type="entry name" value="ATP SYNTHASE SUBUNIT B', CHLOROPLASTIC"/>
    <property type="match status" value="1"/>
</dbReference>
<dbReference type="Pfam" id="PF00430">
    <property type="entry name" value="ATP-synt_B"/>
    <property type="match status" value="1"/>
</dbReference>
<dbReference type="SUPFAM" id="SSF81573">
    <property type="entry name" value="F1F0 ATP synthase subunit B, membrane domain"/>
    <property type="match status" value="1"/>
</dbReference>
<feature type="chain" id="PRO_0000368786" description="ATP synthase subunit b">
    <location>
        <begin position="1"/>
        <end position="173"/>
    </location>
</feature>
<feature type="transmembrane region" description="Helical" evidence="1">
    <location>
        <begin position="15"/>
        <end position="35"/>
    </location>
</feature>
<proteinExistence type="inferred from homology"/>
<evidence type="ECO:0000255" key="1">
    <source>
        <dbReference type="HAMAP-Rule" id="MF_01398"/>
    </source>
</evidence>
<organism>
    <name type="scientific">Staphylococcus aureus (strain NCTC 8325 / PS 47)</name>
    <dbReference type="NCBI Taxonomy" id="93061"/>
    <lineage>
        <taxon>Bacteria</taxon>
        <taxon>Bacillati</taxon>
        <taxon>Bacillota</taxon>
        <taxon>Bacilli</taxon>
        <taxon>Bacillales</taxon>
        <taxon>Staphylococcaceae</taxon>
        <taxon>Staphylococcus</taxon>
    </lineage>
</organism>
<sequence length="173" mass="19539">MTETANLFVLGAAGGVEWGTVIVQVLTFIVLLALLKKFAWGPLKDVMDKRERDINRDIDDAEQAKLNAQKLEEENKQKLKETQEEVQKILEDAKVQARQQQEQIIHEANVRANGMIETAQSEINSQKERAIADINNQVSELSVLIASKVLRKEISEQDQKALVDKYLKEAGDK</sequence>
<comment type="function">
    <text evidence="1">F(1)F(0) ATP synthase produces ATP from ADP in the presence of a proton or sodium gradient. F-type ATPases consist of two structural domains, F(1) containing the extramembraneous catalytic core and F(0) containing the membrane proton channel, linked together by a central stalk and a peripheral stalk. During catalysis, ATP synthesis in the catalytic domain of F(1) is coupled via a rotary mechanism of the central stalk subunits to proton translocation.</text>
</comment>
<comment type="function">
    <text evidence="1">Component of the F(0) channel, it forms part of the peripheral stalk, linking F(1) to F(0).</text>
</comment>
<comment type="subunit">
    <text evidence="1">F-type ATPases have 2 components, F(1) - the catalytic core - and F(0) - the membrane proton channel. F(1) has five subunits: alpha(3), beta(3), gamma(1), delta(1), epsilon(1). F(0) has three main subunits: a(1), b(2) and c(10-14). The alpha and beta chains form an alternating ring which encloses part of the gamma chain. F(1) is attached to F(0) by a central stalk formed by the gamma and epsilon chains, while a peripheral stalk is formed by the delta and b chains.</text>
</comment>
<comment type="subcellular location">
    <subcellularLocation>
        <location evidence="1">Cell membrane</location>
        <topology evidence="1">Single-pass membrane protein</topology>
    </subcellularLocation>
</comment>
<comment type="similarity">
    <text evidence="1">Belongs to the ATPase B chain family.</text>
</comment>
<reference key="1">
    <citation type="book" date="2006" name="Gram positive pathogens, 2nd edition">
        <title>The Staphylococcus aureus NCTC 8325 genome.</title>
        <editorList>
            <person name="Fischetti V."/>
            <person name="Novick R."/>
            <person name="Ferretti J."/>
            <person name="Portnoy D."/>
            <person name="Rood J."/>
        </editorList>
        <authorList>
            <person name="Gillaspy A.F."/>
            <person name="Worrell V."/>
            <person name="Orvis J."/>
            <person name="Roe B.A."/>
            <person name="Dyer D.W."/>
            <person name="Iandolo J.J."/>
        </authorList>
    </citation>
    <scope>NUCLEOTIDE SEQUENCE [LARGE SCALE GENOMIC DNA]</scope>
    <source>
        <strain>NCTC 8325 / PS 47</strain>
    </source>
</reference>
<accession>Q2G2F8</accession>